<organism>
    <name type="scientific">Polaromonas sp. (strain JS666 / ATCC BAA-500)</name>
    <dbReference type="NCBI Taxonomy" id="296591"/>
    <lineage>
        <taxon>Bacteria</taxon>
        <taxon>Pseudomonadati</taxon>
        <taxon>Pseudomonadota</taxon>
        <taxon>Betaproteobacteria</taxon>
        <taxon>Burkholderiales</taxon>
        <taxon>Comamonadaceae</taxon>
        <taxon>Polaromonas</taxon>
    </lineage>
</organism>
<gene>
    <name evidence="1" type="primary">rpoZ</name>
    <name type="ordered locus">Bpro_1334</name>
</gene>
<keyword id="KW-0240">DNA-directed RNA polymerase</keyword>
<keyword id="KW-0548">Nucleotidyltransferase</keyword>
<keyword id="KW-1185">Reference proteome</keyword>
<keyword id="KW-0804">Transcription</keyword>
<keyword id="KW-0808">Transferase</keyword>
<feature type="chain" id="PRO_1000005973" description="DNA-directed RNA polymerase subunit omega">
    <location>
        <begin position="1"/>
        <end position="67"/>
    </location>
</feature>
<dbReference type="EC" id="2.7.7.6" evidence="1"/>
<dbReference type="EMBL" id="CP000316">
    <property type="protein sequence ID" value="ABE43284.1"/>
    <property type="molecule type" value="Genomic_DNA"/>
</dbReference>
<dbReference type="RefSeq" id="WP_011482283.1">
    <property type="nucleotide sequence ID" value="NC_007948.1"/>
</dbReference>
<dbReference type="SMR" id="Q12DV8"/>
<dbReference type="STRING" id="296591.Bpro_1334"/>
<dbReference type="KEGG" id="pol:Bpro_1334"/>
<dbReference type="eggNOG" id="COG1758">
    <property type="taxonomic scope" value="Bacteria"/>
</dbReference>
<dbReference type="HOGENOM" id="CLU_125406_5_1_4"/>
<dbReference type="OrthoDB" id="9796300at2"/>
<dbReference type="Proteomes" id="UP000001983">
    <property type="component" value="Chromosome"/>
</dbReference>
<dbReference type="GO" id="GO:0000428">
    <property type="term" value="C:DNA-directed RNA polymerase complex"/>
    <property type="evidence" value="ECO:0007669"/>
    <property type="project" value="UniProtKB-KW"/>
</dbReference>
<dbReference type="GO" id="GO:0003677">
    <property type="term" value="F:DNA binding"/>
    <property type="evidence" value="ECO:0007669"/>
    <property type="project" value="UniProtKB-UniRule"/>
</dbReference>
<dbReference type="GO" id="GO:0003899">
    <property type="term" value="F:DNA-directed RNA polymerase activity"/>
    <property type="evidence" value="ECO:0007669"/>
    <property type="project" value="UniProtKB-UniRule"/>
</dbReference>
<dbReference type="GO" id="GO:0006351">
    <property type="term" value="P:DNA-templated transcription"/>
    <property type="evidence" value="ECO:0007669"/>
    <property type="project" value="UniProtKB-UniRule"/>
</dbReference>
<dbReference type="Gene3D" id="3.90.940.10">
    <property type="match status" value="1"/>
</dbReference>
<dbReference type="HAMAP" id="MF_00366">
    <property type="entry name" value="RNApol_bact_RpoZ"/>
    <property type="match status" value="1"/>
</dbReference>
<dbReference type="InterPro" id="IPR003716">
    <property type="entry name" value="DNA-dir_RNA_pol_omega"/>
</dbReference>
<dbReference type="InterPro" id="IPR006110">
    <property type="entry name" value="Pol_omega/Rpo6/RPB6"/>
</dbReference>
<dbReference type="InterPro" id="IPR036161">
    <property type="entry name" value="RPB6/omega-like_sf"/>
</dbReference>
<dbReference type="NCBIfam" id="TIGR00690">
    <property type="entry name" value="rpoZ"/>
    <property type="match status" value="1"/>
</dbReference>
<dbReference type="PANTHER" id="PTHR34476">
    <property type="entry name" value="DNA-DIRECTED RNA POLYMERASE SUBUNIT OMEGA"/>
    <property type="match status" value="1"/>
</dbReference>
<dbReference type="PANTHER" id="PTHR34476:SF1">
    <property type="entry name" value="DNA-DIRECTED RNA POLYMERASE SUBUNIT OMEGA"/>
    <property type="match status" value="1"/>
</dbReference>
<dbReference type="Pfam" id="PF01192">
    <property type="entry name" value="RNA_pol_Rpb6"/>
    <property type="match status" value="1"/>
</dbReference>
<dbReference type="SMART" id="SM01409">
    <property type="entry name" value="RNA_pol_Rpb6"/>
    <property type="match status" value="1"/>
</dbReference>
<dbReference type="SUPFAM" id="SSF63562">
    <property type="entry name" value="RPB6/omega subunit-like"/>
    <property type="match status" value="1"/>
</dbReference>
<reference key="1">
    <citation type="journal article" date="2008" name="Appl. Environ. Microbiol.">
        <title>The genome of Polaromonas sp. strain JS666: insights into the evolution of a hydrocarbon- and xenobiotic-degrading bacterium, and features of relevance to biotechnology.</title>
        <authorList>
            <person name="Mattes T.E."/>
            <person name="Alexander A.K."/>
            <person name="Richardson P.M."/>
            <person name="Munk A.C."/>
            <person name="Han C.S."/>
            <person name="Stothard P."/>
            <person name="Coleman N.V."/>
        </authorList>
    </citation>
    <scope>NUCLEOTIDE SEQUENCE [LARGE SCALE GENOMIC DNA]</scope>
    <source>
        <strain>JS666 / ATCC BAA-500</strain>
    </source>
</reference>
<accession>Q12DV8</accession>
<proteinExistence type="inferred from homology"/>
<sequence length="67" mass="7422">MARITVEDCLEKIPNRFQLVLAATYRARMLSQGHAAKIESKNKPGVTALREIAEGKIGLEMLKKVPS</sequence>
<evidence type="ECO:0000255" key="1">
    <source>
        <dbReference type="HAMAP-Rule" id="MF_00366"/>
    </source>
</evidence>
<protein>
    <recommendedName>
        <fullName evidence="1">DNA-directed RNA polymerase subunit omega</fullName>
        <shortName evidence="1">RNAP omega subunit</shortName>
        <ecNumber evidence="1">2.7.7.6</ecNumber>
    </recommendedName>
    <alternativeName>
        <fullName evidence="1">RNA polymerase omega subunit</fullName>
    </alternativeName>
    <alternativeName>
        <fullName evidence="1">Transcriptase subunit omega</fullName>
    </alternativeName>
</protein>
<name>RPOZ_POLSJ</name>
<comment type="function">
    <text evidence="1">Promotes RNA polymerase assembly. Latches the N- and C-terminal regions of the beta' subunit thereby facilitating its interaction with the beta and alpha subunits.</text>
</comment>
<comment type="catalytic activity">
    <reaction evidence="1">
        <text>RNA(n) + a ribonucleoside 5'-triphosphate = RNA(n+1) + diphosphate</text>
        <dbReference type="Rhea" id="RHEA:21248"/>
        <dbReference type="Rhea" id="RHEA-COMP:14527"/>
        <dbReference type="Rhea" id="RHEA-COMP:17342"/>
        <dbReference type="ChEBI" id="CHEBI:33019"/>
        <dbReference type="ChEBI" id="CHEBI:61557"/>
        <dbReference type="ChEBI" id="CHEBI:140395"/>
        <dbReference type="EC" id="2.7.7.6"/>
    </reaction>
</comment>
<comment type="subunit">
    <text evidence="1">The RNAP catalytic core consists of 2 alpha, 1 beta, 1 beta' and 1 omega subunit. When a sigma factor is associated with the core the holoenzyme is formed, which can initiate transcription.</text>
</comment>
<comment type="similarity">
    <text evidence="1">Belongs to the RNA polymerase subunit omega family.</text>
</comment>